<proteinExistence type="evidence at protein level"/>
<feature type="chain" id="PRO_0000282982" description="Schlafen family member 5">
    <location>
        <begin position="1"/>
        <end position="891"/>
    </location>
</feature>
<feature type="binding site" evidence="2">
    <location>
        <begin position="578"/>
        <end position="585"/>
    </location>
    <ligand>
        <name>ATP</name>
        <dbReference type="ChEBI" id="CHEBI:30616"/>
    </ligand>
</feature>
<feature type="cross-link" description="Glycyl lysine isopeptide (Lys-Gly) (interchain with G-Cter in SUMO2)" evidence="6">
    <location>
        <position position="59"/>
    </location>
</feature>
<feature type="splice variant" id="VSP_024271" description="In isoform 2." evidence="4">
    <original>D</original>
    <variation>G</variation>
    <location>
        <position position="338"/>
    </location>
</feature>
<feature type="splice variant" id="VSP_024272" description="In isoform 2." evidence="4">
    <location>
        <begin position="339"/>
        <end position="891"/>
    </location>
</feature>
<feature type="sequence variant" id="VAR_053876" description="In dbSNP:rs16970806.">
    <original>V</original>
    <variation>L</variation>
    <location>
        <position position="754"/>
    </location>
</feature>
<feature type="sequence variant" id="VAR_031445" description="In dbSNP:rs11651240." evidence="3">
    <original>P</original>
    <variation>L</variation>
    <location>
        <position position="787"/>
    </location>
</feature>
<feature type="sequence variant" id="VAR_031446" description="In dbSNP:rs2291189.">
    <original>A</original>
    <variation>V</variation>
    <location>
        <position position="797"/>
    </location>
</feature>
<feature type="sequence conflict" description="In Ref. 1; AAI25202." evidence="5" ref="1">
    <original>Y</original>
    <variation>H</variation>
    <location>
        <position position="183"/>
    </location>
</feature>
<feature type="strand" evidence="7">
    <location>
        <begin position="6"/>
        <end position="8"/>
    </location>
</feature>
<feature type="strand" evidence="8">
    <location>
        <begin position="9"/>
        <end position="13"/>
    </location>
</feature>
<feature type="strand" evidence="9">
    <location>
        <begin position="15"/>
        <end position="21"/>
    </location>
</feature>
<feature type="helix" evidence="9">
    <location>
        <begin position="25"/>
        <end position="30"/>
    </location>
</feature>
<feature type="helix" evidence="9">
    <location>
        <begin position="33"/>
        <end position="51"/>
    </location>
</feature>
<feature type="turn" evidence="9">
    <location>
        <begin position="52"/>
        <end position="54"/>
    </location>
</feature>
<feature type="strand" evidence="9">
    <location>
        <begin position="56"/>
        <end position="62"/>
    </location>
</feature>
<feature type="helix" evidence="9">
    <location>
        <begin position="69"/>
        <end position="72"/>
    </location>
</feature>
<feature type="helix" evidence="9">
    <location>
        <begin position="80"/>
        <end position="83"/>
    </location>
</feature>
<feature type="strand" evidence="9">
    <location>
        <begin position="86"/>
        <end position="91"/>
    </location>
</feature>
<feature type="strand" evidence="9">
    <location>
        <begin position="94"/>
        <end position="99"/>
    </location>
</feature>
<feature type="helix" evidence="9">
    <location>
        <begin position="105"/>
        <end position="107"/>
    </location>
</feature>
<feature type="strand" evidence="9">
    <location>
        <begin position="118"/>
        <end position="121"/>
    </location>
</feature>
<feature type="strand" evidence="9">
    <location>
        <begin position="124"/>
        <end position="127"/>
    </location>
</feature>
<feature type="helix" evidence="9">
    <location>
        <begin position="130"/>
        <end position="140"/>
    </location>
</feature>
<feature type="helix" evidence="9">
    <location>
        <begin position="170"/>
        <end position="176"/>
    </location>
</feature>
<feature type="strand" evidence="9">
    <location>
        <begin position="179"/>
        <end position="182"/>
    </location>
</feature>
<feature type="strand" evidence="9">
    <location>
        <begin position="195"/>
        <end position="198"/>
    </location>
</feature>
<feature type="helix" evidence="9">
    <location>
        <begin position="204"/>
        <end position="221"/>
    </location>
</feature>
<feature type="strand" evidence="9">
    <location>
        <begin position="225"/>
        <end position="229"/>
    </location>
</feature>
<feature type="turn" evidence="9">
    <location>
        <begin position="233"/>
        <end position="236"/>
    </location>
</feature>
<feature type="helix" evidence="9">
    <location>
        <begin position="243"/>
        <end position="245"/>
    </location>
</feature>
<feature type="helix" evidence="9">
    <location>
        <begin position="248"/>
        <end position="261"/>
    </location>
</feature>
<feature type="strand" evidence="9">
    <location>
        <begin position="268"/>
        <end position="270"/>
    </location>
</feature>
<feature type="strand" evidence="9">
    <location>
        <begin position="276"/>
        <end position="285"/>
    </location>
</feature>
<feature type="strand" evidence="9">
    <location>
        <begin position="288"/>
        <end position="298"/>
    </location>
</feature>
<feature type="strand" evidence="9">
    <location>
        <begin position="302"/>
        <end position="305"/>
    </location>
</feature>
<feature type="strand" evidence="9">
    <location>
        <begin position="307"/>
        <end position="309"/>
    </location>
</feature>
<feature type="strand" evidence="9">
    <location>
        <begin position="313"/>
        <end position="316"/>
    </location>
</feature>
<feature type="strand" evidence="9">
    <location>
        <begin position="319"/>
        <end position="322"/>
    </location>
</feature>
<feature type="helix" evidence="9">
    <location>
        <begin position="325"/>
        <end position="332"/>
    </location>
</feature>
<feature type="strand" evidence="8">
    <location>
        <begin position="345"/>
        <end position="349"/>
    </location>
</feature>
<feature type="strand" evidence="8">
    <location>
        <begin position="361"/>
        <end position="367"/>
    </location>
</feature>
<feature type="helix" evidence="8">
    <location>
        <begin position="370"/>
        <end position="377"/>
    </location>
</feature>
<feature type="strand" evidence="8">
    <location>
        <begin position="384"/>
        <end position="388"/>
    </location>
</feature>
<feature type="helix" evidence="8">
    <location>
        <begin position="390"/>
        <end position="399"/>
    </location>
</feature>
<feature type="strand" evidence="8">
    <location>
        <begin position="400"/>
        <end position="402"/>
    </location>
</feature>
<feature type="helix" evidence="8">
    <location>
        <begin position="403"/>
        <end position="410"/>
    </location>
</feature>
<feature type="strand" evidence="8">
    <location>
        <begin position="416"/>
        <end position="423"/>
    </location>
</feature>
<feature type="helix" evidence="8">
    <location>
        <begin position="425"/>
        <end position="429"/>
    </location>
</feature>
<feature type="strand" evidence="8">
    <location>
        <begin position="435"/>
        <end position="444"/>
    </location>
</feature>
<feature type="strand" evidence="8">
    <location>
        <begin position="451"/>
        <end position="458"/>
    </location>
</feature>
<feature type="helix" evidence="8">
    <location>
        <begin position="463"/>
        <end position="479"/>
    </location>
</feature>
<feature type="turn" evidence="8">
    <location>
        <begin position="480"/>
        <end position="482"/>
    </location>
</feature>
<feature type="strand" evidence="8">
    <location>
        <begin position="491"/>
        <end position="496"/>
    </location>
</feature>
<feature type="turn" evidence="8">
    <location>
        <begin position="516"/>
        <end position="518"/>
    </location>
</feature>
<feature type="turn" evidence="8">
    <location>
        <begin position="523"/>
        <end position="525"/>
    </location>
</feature>
<feature type="helix" evidence="8">
    <location>
        <begin position="526"/>
        <end position="538"/>
    </location>
</feature>
<feature type="strand" evidence="8">
    <location>
        <begin position="539"/>
        <end position="541"/>
    </location>
</feature>
<feature type="strand" evidence="8">
    <location>
        <begin position="543"/>
        <end position="545"/>
    </location>
</feature>
<feature type="turn" evidence="8">
    <location>
        <begin position="546"/>
        <end position="548"/>
    </location>
</feature>
<feature type="strand" evidence="8">
    <location>
        <begin position="553"/>
        <end position="555"/>
    </location>
</feature>
<feature type="helix" evidence="8">
    <location>
        <begin position="558"/>
        <end position="565"/>
    </location>
</feature>
<feature type="turn" evidence="8">
    <location>
        <begin position="568"/>
        <end position="570"/>
    </location>
</feature>
<feature type="strand" evidence="8">
    <location>
        <begin position="572"/>
        <end position="575"/>
    </location>
</feature>
<feature type="helix" evidence="8">
    <location>
        <begin position="583"/>
        <end position="598"/>
    </location>
</feature>
<feature type="helix" evidence="8">
    <location>
        <begin position="603"/>
        <end position="605"/>
    </location>
</feature>
<feature type="strand" evidence="8">
    <location>
        <begin position="606"/>
        <end position="609"/>
    </location>
</feature>
<feature type="helix" evidence="8">
    <location>
        <begin position="613"/>
        <end position="620"/>
    </location>
</feature>
<feature type="helix" evidence="8">
    <location>
        <begin position="632"/>
        <end position="636"/>
    </location>
</feature>
<feature type="strand" evidence="8">
    <location>
        <begin position="645"/>
        <end position="649"/>
    </location>
</feature>
<feature type="helix" evidence="8">
    <location>
        <begin position="651"/>
        <end position="653"/>
    </location>
</feature>
<feature type="turn" evidence="8">
    <location>
        <begin position="656"/>
        <end position="658"/>
    </location>
</feature>
<feature type="helix" evidence="8">
    <location>
        <begin position="661"/>
        <end position="670"/>
    </location>
</feature>
<feature type="strand" evidence="8">
    <location>
        <begin position="673"/>
        <end position="675"/>
    </location>
</feature>
<feature type="strand" evidence="8">
    <location>
        <begin position="679"/>
        <end position="682"/>
    </location>
</feature>
<sequence length="891" mass="101055">MSLRIDVDTNFPECVVDAGKVTLGTQQRQEMDPRLREKQNEIILRAVCALLNSGGGIIKAEIENKGYNYERHGVGLDVPPIFRSHLDKMQKENHFLIFVKSWNTEAGVPLATLCSNLYHRERTSTDVMDSQEALAFLKCRTQTPTNINVSNSLGPQAAQGSVQYEGNINVSAAALFDRKRLQYLEKLNLPESTHVEFVMFSTDVSHCVKDRLPKCVSAFANTEGGYVFFGVHDETCQVIGCEKEKIDLTSLRASIDGCIKKLPVHHFCTQRPEIKYVLNFLEVHDKGALRGYVCAIKVEKFCCAVFAKVPSSWQVKDNRVRQLPTREWTAWMMEADPDLSRCPEMVLQLSLSSATPRSKPVCIHKNSECLKEQQKRYFPVFSDRVVYTPESLYKELFSQHKGLRDLINTEMRPFSQGILIFSQSWAVDLGLQEKQGVICDALLISQNNTPILYTIFSKWDAGCKGYSMIVAYSLKQKLVNKGGYTGRLCITPLVCVLNSDRKAQSVYSSYLQIYPESYNFMTPQHMEALLQSLVIVLLGFKSFLSEELGSEVLNLLTNKQYELLSKNLRKTRELFVHGLPGSGKTILALRIMEKIRNVFHCEPANILYICENQPLKKLVSFSKKNICQPVTRKTFMKNNFEHIQHIIIDDAQNFRTEDGDWYGKAKFITQTARDGPGVLWIFLDYFQTYHLSCSGLPPPSDQYPREEINRVVRNAGPIANYLQQVMQEARQNPPPNLPPGSLVMLYEPKWAQGVPGNLEIIEDLNLEEILIYVANKCRFLLRNGYSPKDIAVLFTKASEVEKYKDRLLTAMRKRKLSQLHEESDLLLQIGDASDVLTDHIVLDSVCRFSGLERNIVFGINPGVAPPAGAYNLLLCLASRAKRHLYILKASV</sequence>
<evidence type="ECO:0000250" key="1"/>
<evidence type="ECO:0000255" key="2"/>
<evidence type="ECO:0000269" key="3">
    <source>
    </source>
</evidence>
<evidence type="ECO:0000303" key="4">
    <source>
    </source>
</evidence>
<evidence type="ECO:0000305" key="5"/>
<evidence type="ECO:0007744" key="6">
    <source>
    </source>
</evidence>
<evidence type="ECO:0007829" key="7">
    <source>
        <dbReference type="PDB" id="6RR9"/>
    </source>
</evidence>
<evidence type="ECO:0007829" key="8">
    <source>
        <dbReference type="PDB" id="7PPJ"/>
    </source>
</evidence>
<evidence type="ECO:0007829" key="9">
    <source>
        <dbReference type="PDB" id="7Q3Z"/>
    </source>
</evidence>
<name>SLFN5_HUMAN</name>
<dbReference type="EMBL" id="BC021238">
    <property type="protein sequence ID" value="AAH21238.1"/>
    <property type="molecule type" value="mRNA"/>
</dbReference>
<dbReference type="EMBL" id="BC125200">
    <property type="protein sequence ID" value="AAI25201.1"/>
    <property type="molecule type" value="mRNA"/>
</dbReference>
<dbReference type="EMBL" id="BC125201">
    <property type="protein sequence ID" value="AAI25202.1"/>
    <property type="molecule type" value="mRNA"/>
</dbReference>
<dbReference type="EMBL" id="AK054668">
    <property type="protein sequence ID" value="BAB70788.1"/>
    <property type="molecule type" value="mRNA"/>
</dbReference>
<dbReference type="CCDS" id="CCDS32619.1">
    <molecule id="Q08AF3-1"/>
</dbReference>
<dbReference type="RefSeq" id="NP_659412.3">
    <molecule id="Q08AF3-1"/>
    <property type="nucleotide sequence ID" value="NM_144975.3"/>
</dbReference>
<dbReference type="PDB" id="6RR9">
    <property type="method" value="X-ray"/>
    <property type="resolution" value="3.43 A"/>
    <property type="chains" value="A=1-336"/>
</dbReference>
<dbReference type="PDB" id="7CUX">
    <property type="method" value="X-ray"/>
    <property type="resolution" value="3.29 A"/>
    <property type="chains" value="A/B/C/D/E/F=12-337"/>
</dbReference>
<dbReference type="PDB" id="7PPJ">
    <property type="method" value="EM"/>
    <property type="resolution" value="3.44 A"/>
    <property type="chains" value="A=1-891"/>
</dbReference>
<dbReference type="PDB" id="7Q3Z">
    <property type="method" value="X-ray"/>
    <property type="resolution" value="1.85 A"/>
    <property type="chains" value="A/B=1-336"/>
</dbReference>
<dbReference type="PDBsum" id="6RR9"/>
<dbReference type="PDBsum" id="7CUX"/>
<dbReference type="PDBsum" id="7PPJ"/>
<dbReference type="PDBsum" id="7Q3Z"/>
<dbReference type="EMDB" id="EMD-13581"/>
<dbReference type="SMR" id="Q08AF3"/>
<dbReference type="BioGRID" id="127815">
    <property type="interactions" value="72"/>
</dbReference>
<dbReference type="FunCoup" id="Q08AF3">
    <property type="interactions" value="60"/>
</dbReference>
<dbReference type="IntAct" id="Q08AF3">
    <property type="interactions" value="37"/>
</dbReference>
<dbReference type="MINT" id="Q08AF3"/>
<dbReference type="STRING" id="9606.ENSP00000299977"/>
<dbReference type="GlyCosmos" id="Q08AF3">
    <property type="glycosylation" value="2 sites, 2 glycans"/>
</dbReference>
<dbReference type="GlyGen" id="Q08AF3">
    <property type="glycosylation" value="2 sites, 2 O-linked glycans (2 sites)"/>
</dbReference>
<dbReference type="iPTMnet" id="Q08AF3"/>
<dbReference type="PhosphoSitePlus" id="Q08AF3"/>
<dbReference type="SwissPalm" id="Q08AF3"/>
<dbReference type="BioMuta" id="SLFN5"/>
<dbReference type="DMDM" id="121939987"/>
<dbReference type="jPOST" id="Q08AF3"/>
<dbReference type="MassIVE" id="Q08AF3"/>
<dbReference type="PaxDb" id="9606-ENSP00000299977"/>
<dbReference type="PeptideAtlas" id="Q08AF3"/>
<dbReference type="ProteomicsDB" id="58663">
    <molecule id="Q08AF3-1"/>
</dbReference>
<dbReference type="ProteomicsDB" id="58664">
    <molecule id="Q08AF3-2"/>
</dbReference>
<dbReference type="Pumba" id="Q08AF3"/>
<dbReference type="Antibodypedia" id="2910">
    <property type="antibodies" value="28 antibodies from 15 providers"/>
</dbReference>
<dbReference type="DNASU" id="162394"/>
<dbReference type="Ensembl" id="ENST00000299977.9">
    <molecule id="Q08AF3-1"/>
    <property type="protein sequence ID" value="ENSP00000299977.3"/>
    <property type="gene ID" value="ENSG00000166750.10"/>
</dbReference>
<dbReference type="Ensembl" id="ENST00000592325.1">
    <molecule id="Q08AF3-2"/>
    <property type="protein sequence ID" value="ENSP00000466984.1"/>
    <property type="gene ID" value="ENSG00000166750.10"/>
</dbReference>
<dbReference type="GeneID" id="162394"/>
<dbReference type="KEGG" id="hsa:162394"/>
<dbReference type="MANE-Select" id="ENST00000299977.9">
    <property type="protein sequence ID" value="ENSP00000299977.3"/>
    <property type="RefSeq nucleotide sequence ID" value="NM_144975.4"/>
    <property type="RefSeq protein sequence ID" value="NP_659412.3"/>
</dbReference>
<dbReference type="UCSC" id="uc002hje.4">
    <molecule id="Q08AF3-1"/>
    <property type="organism name" value="human"/>
</dbReference>
<dbReference type="AGR" id="HGNC:28286"/>
<dbReference type="CTD" id="162394"/>
<dbReference type="DisGeNET" id="162394"/>
<dbReference type="GeneCards" id="SLFN5"/>
<dbReference type="HGNC" id="HGNC:28286">
    <property type="gene designation" value="SLFN5"/>
</dbReference>
<dbReference type="HPA" id="ENSG00000166750">
    <property type="expression patterns" value="Low tissue specificity"/>
</dbReference>
<dbReference type="MIM" id="614952">
    <property type="type" value="gene"/>
</dbReference>
<dbReference type="neXtProt" id="NX_Q08AF3"/>
<dbReference type="OpenTargets" id="ENSG00000166750"/>
<dbReference type="PharmGKB" id="PA144596357"/>
<dbReference type="VEuPathDB" id="HostDB:ENSG00000166750"/>
<dbReference type="eggNOG" id="ENOG502QWKG">
    <property type="taxonomic scope" value="Eukaryota"/>
</dbReference>
<dbReference type="GeneTree" id="ENSGT00410000025651"/>
<dbReference type="HOGENOM" id="CLU_007071_0_0_1"/>
<dbReference type="InParanoid" id="Q08AF3"/>
<dbReference type="OMA" id="RTVCTHK"/>
<dbReference type="OrthoDB" id="6052143at2759"/>
<dbReference type="PAN-GO" id="Q08AF3">
    <property type="GO annotations" value="0 GO annotations based on evolutionary models"/>
</dbReference>
<dbReference type="PhylomeDB" id="Q08AF3"/>
<dbReference type="TreeFam" id="TF337168"/>
<dbReference type="PathwayCommons" id="Q08AF3"/>
<dbReference type="SignaLink" id="Q08AF3"/>
<dbReference type="BioGRID-ORCS" id="162394">
    <property type="hits" value="14 hits in 1153 CRISPR screens"/>
</dbReference>
<dbReference type="ChiTaRS" id="SLFN5">
    <property type="organism name" value="human"/>
</dbReference>
<dbReference type="GenomeRNAi" id="162394"/>
<dbReference type="Pharos" id="Q08AF3">
    <property type="development level" value="Tbio"/>
</dbReference>
<dbReference type="PRO" id="PR:Q08AF3"/>
<dbReference type="Proteomes" id="UP000005640">
    <property type="component" value="Chromosome 17"/>
</dbReference>
<dbReference type="RNAct" id="Q08AF3">
    <property type="molecule type" value="protein"/>
</dbReference>
<dbReference type="Bgee" id="ENSG00000166750">
    <property type="expression patterns" value="Expressed in visceral pleura and 190 other cell types or tissues"/>
</dbReference>
<dbReference type="ExpressionAtlas" id="Q08AF3">
    <property type="expression patterns" value="baseline and differential"/>
</dbReference>
<dbReference type="GO" id="GO:0005634">
    <property type="term" value="C:nucleus"/>
    <property type="evidence" value="ECO:0007669"/>
    <property type="project" value="Ensembl"/>
</dbReference>
<dbReference type="GO" id="GO:0005524">
    <property type="term" value="F:ATP binding"/>
    <property type="evidence" value="ECO:0007669"/>
    <property type="project" value="UniProtKB-KW"/>
</dbReference>
<dbReference type="GO" id="GO:0030154">
    <property type="term" value="P:cell differentiation"/>
    <property type="evidence" value="ECO:0007669"/>
    <property type="project" value="UniProtKB-KW"/>
</dbReference>
<dbReference type="FunFam" id="3.40.50.300:FF:001322">
    <property type="entry name" value="Schlafen family member 11"/>
    <property type="match status" value="1"/>
</dbReference>
<dbReference type="FunFam" id="3.30.950.30:FF:000001">
    <property type="entry name" value="Schlafen family member 14"/>
    <property type="match status" value="1"/>
</dbReference>
<dbReference type="Gene3D" id="3.40.50.300">
    <property type="entry name" value="P-loop containing nucleotide triphosphate hydrolases"/>
    <property type="match status" value="2"/>
</dbReference>
<dbReference type="Gene3D" id="3.30.950.30">
    <property type="entry name" value="Schlafen, AAA domain"/>
    <property type="match status" value="1"/>
</dbReference>
<dbReference type="InterPro" id="IPR027417">
    <property type="entry name" value="P-loop_NTPase"/>
</dbReference>
<dbReference type="InterPro" id="IPR031450">
    <property type="entry name" value="Poxin-SLFN/SLFN_N"/>
</dbReference>
<dbReference type="InterPro" id="IPR029684">
    <property type="entry name" value="Schlafen"/>
</dbReference>
<dbReference type="InterPro" id="IPR007421">
    <property type="entry name" value="Schlafen_AlbA_2_dom"/>
</dbReference>
<dbReference type="InterPro" id="IPR038461">
    <property type="entry name" value="Schlafen_AlbA_2_dom_sf"/>
</dbReference>
<dbReference type="InterPro" id="IPR048729">
    <property type="entry name" value="SLFN_GTPase-like"/>
</dbReference>
<dbReference type="PANTHER" id="PTHR12155">
    <property type="entry name" value="SCHLAFEN"/>
    <property type="match status" value="1"/>
</dbReference>
<dbReference type="PANTHER" id="PTHR12155:SF26">
    <property type="entry name" value="SCHLAFEN FAMILY MEMBER 5"/>
    <property type="match status" value="1"/>
</dbReference>
<dbReference type="Pfam" id="PF17057">
    <property type="entry name" value="B3R"/>
    <property type="match status" value="1"/>
</dbReference>
<dbReference type="Pfam" id="PF04326">
    <property type="entry name" value="SLFN_AlbA_2"/>
    <property type="match status" value="1"/>
</dbReference>
<dbReference type="Pfam" id="PF21026">
    <property type="entry name" value="SLFN_GTPase-like"/>
    <property type="match status" value="1"/>
</dbReference>
<dbReference type="SUPFAM" id="SSF52540">
    <property type="entry name" value="P-loop containing nucleoside triphosphate hydrolases"/>
    <property type="match status" value="1"/>
</dbReference>
<reference key="1">
    <citation type="journal article" date="2004" name="Genome Res.">
        <title>The status, quality, and expansion of the NIH full-length cDNA project: the Mammalian Gene Collection (MGC).</title>
        <authorList>
            <consortium name="The MGC Project Team"/>
        </authorList>
    </citation>
    <scope>NUCLEOTIDE SEQUENCE [LARGE SCALE MRNA] (ISOFORMS 1 AND 2)</scope>
    <source>
        <tissue>Placenta</tissue>
    </source>
</reference>
<reference key="2">
    <citation type="journal article" date="2004" name="Nat. Genet.">
        <title>Complete sequencing and characterization of 21,243 full-length human cDNAs.</title>
        <authorList>
            <person name="Ota T."/>
            <person name="Suzuki Y."/>
            <person name="Nishikawa T."/>
            <person name="Otsuki T."/>
            <person name="Sugiyama T."/>
            <person name="Irie R."/>
            <person name="Wakamatsu A."/>
            <person name="Hayashi K."/>
            <person name="Sato H."/>
            <person name="Nagai K."/>
            <person name="Kimura K."/>
            <person name="Makita H."/>
            <person name="Sekine M."/>
            <person name="Obayashi M."/>
            <person name="Nishi T."/>
            <person name="Shibahara T."/>
            <person name="Tanaka T."/>
            <person name="Ishii S."/>
            <person name="Yamamoto J."/>
            <person name="Saito K."/>
            <person name="Kawai Y."/>
            <person name="Isono Y."/>
            <person name="Nakamura Y."/>
            <person name="Nagahari K."/>
            <person name="Murakami K."/>
            <person name="Yasuda T."/>
            <person name="Iwayanagi T."/>
            <person name="Wagatsuma M."/>
            <person name="Shiratori A."/>
            <person name="Sudo H."/>
            <person name="Hosoiri T."/>
            <person name="Kaku Y."/>
            <person name="Kodaira H."/>
            <person name="Kondo H."/>
            <person name="Sugawara M."/>
            <person name="Takahashi M."/>
            <person name="Kanda K."/>
            <person name="Yokoi T."/>
            <person name="Furuya T."/>
            <person name="Kikkawa E."/>
            <person name="Omura Y."/>
            <person name="Abe K."/>
            <person name="Kamihara K."/>
            <person name="Katsuta N."/>
            <person name="Sato K."/>
            <person name="Tanikawa M."/>
            <person name="Yamazaki M."/>
            <person name="Ninomiya K."/>
            <person name="Ishibashi T."/>
            <person name="Yamashita H."/>
            <person name="Murakawa K."/>
            <person name="Fujimori K."/>
            <person name="Tanai H."/>
            <person name="Kimata M."/>
            <person name="Watanabe M."/>
            <person name="Hiraoka S."/>
            <person name="Chiba Y."/>
            <person name="Ishida S."/>
            <person name="Ono Y."/>
            <person name="Takiguchi S."/>
            <person name="Watanabe S."/>
            <person name="Yosida M."/>
            <person name="Hotuta T."/>
            <person name="Kusano J."/>
            <person name="Kanehori K."/>
            <person name="Takahashi-Fujii A."/>
            <person name="Hara H."/>
            <person name="Tanase T.-O."/>
            <person name="Nomura Y."/>
            <person name="Togiya S."/>
            <person name="Komai F."/>
            <person name="Hara R."/>
            <person name="Takeuchi K."/>
            <person name="Arita M."/>
            <person name="Imose N."/>
            <person name="Musashino K."/>
            <person name="Yuuki H."/>
            <person name="Oshima A."/>
            <person name="Sasaki N."/>
            <person name="Aotsuka S."/>
            <person name="Yoshikawa Y."/>
            <person name="Matsunawa H."/>
            <person name="Ichihara T."/>
            <person name="Shiohata N."/>
            <person name="Sano S."/>
            <person name="Moriya S."/>
            <person name="Momiyama H."/>
            <person name="Satoh N."/>
            <person name="Takami S."/>
            <person name="Terashima Y."/>
            <person name="Suzuki O."/>
            <person name="Nakagawa S."/>
            <person name="Senoh A."/>
            <person name="Mizoguchi H."/>
            <person name="Goto Y."/>
            <person name="Shimizu F."/>
            <person name="Wakebe H."/>
            <person name="Hishigaki H."/>
            <person name="Watanabe T."/>
            <person name="Sugiyama A."/>
            <person name="Takemoto M."/>
            <person name="Kawakami B."/>
            <person name="Yamazaki M."/>
            <person name="Watanabe K."/>
            <person name="Kumagai A."/>
            <person name="Itakura S."/>
            <person name="Fukuzumi Y."/>
            <person name="Fujimori Y."/>
            <person name="Komiyama M."/>
            <person name="Tashiro H."/>
            <person name="Tanigami A."/>
            <person name="Fujiwara T."/>
            <person name="Ono T."/>
            <person name="Yamada K."/>
            <person name="Fujii Y."/>
            <person name="Ozaki K."/>
            <person name="Hirao M."/>
            <person name="Ohmori Y."/>
            <person name="Kawabata A."/>
            <person name="Hikiji T."/>
            <person name="Kobatake N."/>
            <person name="Inagaki H."/>
            <person name="Ikema Y."/>
            <person name="Okamoto S."/>
            <person name="Okitani R."/>
            <person name="Kawakami T."/>
            <person name="Noguchi S."/>
            <person name="Itoh T."/>
            <person name="Shigeta K."/>
            <person name="Senba T."/>
            <person name="Matsumura K."/>
            <person name="Nakajima Y."/>
            <person name="Mizuno T."/>
            <person name="Morinaga M."/>
            <person name="Sasaki M."/>
            <person name="Togashi T."/>
            <person name="Oyama M."/>
            <person name="Hata H."/>
            <person name="Watanabe M."/>
            <person name="Komatsu T."/>
            <person name="Mizushima-Sugano J."/>
            <person name="Satoh T."/>
            <person name="Shirai Y."/>
            <person name="Takahashi Y."/>
            <person name="Nakagawa K."/>
            <person name="Okumura K."/>
            <person name="Nagase T."/>
            <person name="Nomura N."/>
            <person name="Kikuchi H."/>
            <person name="Masuho Y."/>
            <person name="Yamashita R."/>
            <person name="Nakai K."/>
            <person name="Yada T."/>
            <person name="Nakamura Y."/>
            <person name="Ohara O."/>
            <person name="Isogai T."/>
            <person name="Sugano S."/>
        </authorList>
    </citation>
    <scope>NUCLEOTIDE SEQUENCE [LARGE SCALE MRNA] OF 1-782 (ISOFORM 1)</scope>
    <scope>VARIANT LEU-787</scope>
</reference>
<reference key="3">
    <citation type="journal article" date="2011" name="BMC Syst. Biol.">
        <title>Initial characterization of the human central proteome.</title>
        <authorList>
            <person name="Burkard T.R."/>
            <person name="Planyavsky M."/>
            <person name="Kaupe I."/>
            <person name="Breitwieser F.P."/>
            <person name="Buerckstuemmer T."/>
            <person name="Bennett K.L."/>
            <person name="Superti-Furga G."/>
            <person name="Colinge J."/>
        </authorList>
    </citation>
    <scope>IDENTIFICATION BY MASS SPECTROMETRY [LARGE SCALE ANALYSIS]</scope>
</reference>
<reference key="4">
    <citation type="journal article" date="2017" name="Nat. Struct. Mol. Biol.">
        <title>Site-specific mapping of the human SUMO proteome reveals co-modification with phosphorylation.</title>
        <authorList>
            <person name="Hendriks I.A."/>
            <person name="Lyon D."/>
            <person name="Young C."/>
            <person name="Jensen L.J."/>
            <person name="Vertegaal A.C."/>
            <person name="Nielsen M.L."/>
        </authorList>
    </citation>
    <scope>SUMOYLATION [LARGE SCALE ANALYSIS] AT LYS-59</scope>
    <scope>IDENTIFICATION BY MASS SPECTROMETRY [LARGE SCALE ANALYSIS]</scope>
</reference>
<comment type="function">
    <text evidence="1">May have a role in hematopoietic cell differentiation.</text>
</comment>
<comment type="alternative products">
    <event type="alternative splicing"/>
    <isoform>
        <id>Q08AF3-1</id>
        <name>1</name>
        <sequence type="displayed"/>
    </isoform>
    <isoform>
        <id>Q08AF3-2</id>
        <name>2</name>
        <sequence type="described" ref="VSP_024271 VSP_024272"/>
    </isoform>
</comment>
<comment type="similarity">
    <text evidence="5">Belongs to the Schlafen family. Subgroup III subfamily.</text>
</comment>
<accession>Q08AF3</accession>
<accession>Q08AF2</accession>
<accession>Q8WU54</accession>
<accession>Q96A82</accession>
<gene>
    <name type="primary">SLFN5</name>
</gene>
<protein>
    <recommendedName>
        <fullName>Schlafen family member 5</fullName>
    </recommendedName>
</protein>
<organism>
    <name type="scientific">Homo sapiens</name>
    <name type="common">Human</name>
    <dbReference type="NCBI Taxonomy" id="9606"/>
    <lineage>
        <taxon>Eukaryota</taxon>
        <taxon>Metazoa</taxon>
        <taxon>Chordata</taxon>
        <taxon>Craniata</taxon>
        <taxon>Vertebrata</taxon>
        <taxon>Euteleostomi</taxon>
        <taxon>Mammalia</taxon>
        <taxon>Eutheria</taxon>
        <taxon>Euarchontoglires</taxon>
        <taxon>Primates</taxon>
        <taxon>Haplorrhini</taxon>
        <taxon>Catarrhini</taxon>
        <taxon>Hominidae</taxon>
        <taxon>Homo</taxon>
    </lineage>
</organism>
<keyword id="KW-0002">3D-structure</keyword>
<keyword id="KW-0025">Alternative splicing</keyword>
<keyword id="KW-0067">ATP-binding</keyword>
<keyword id="KW-0221">Differentiation</keyword>
<keyword id="KW-1017">Isopeptide bond</keyword>
<keyword id="KW-0547">Nucleotide-binding</keyword>
<keyword id="KW-1267">Proteomics identification</keyword>
<keyword id="KW-1185">Reference proteome</keyword>
<keyword id="KW-0832">Ubl conjugation</keyword>